<comment type="function">
    <text evidence="1">NDH-1 shuttles electrons from NADH, via FMN and iron-sulfur (Fe-S) centers, to quinones in the respiratory chain. The immediate electron acceptor for the enzyme in this species is believed to be ubiquinone. Couples the redox reaction to proton translocation (for every two electrons transferred, four hydrogen ions are translocated across the cytoplasmic membrane), and thus conserves the redox energy in a proton gradient.</text>
</comment>
<comment type="catalytic activity">
    <reaction evidence="1">
        <text>a quinone + NADH + 5 H(+)(in) = a quinol + NAD(+) + 4 H(+)(out)</text>
        <dbReference type="Rhea" id="RHEA:57888"/>
        <dbReference type="ChEBI" id="CHEBI:15378"/>
        <dbReference type="ChEBI" id="CHEBI:24646"/>
        <dbReference type="ChEBI" id="CHEBI:57540"/>
        <dbReference type="ChEBI" id="CHEBI:57945"/>
        <dbReference type="ChEBI" id="CHEBI:132124"/>
    </reaction>
</comment>
<comment type="subunit">
    <text evidence="1">NDH-1 is composed of 14 different subunits. Subunits NuoA, H, J, K, L, M, N constitute the membrane sector of the complex.</text>
</comment>
<comment type="subcellular location">
    <subcellularLocation>
        <location evidence="1">Cell inner membrane</location>
        <topology evidence="1">Multi-pass membrane protein</topology>
    </subcellularLocation>
</comment>
<comment type="similarity">
    <text evidence="1">Belongs to the complex I subunit 2 family.</text>
</comment>
<evidence type="ECO:0000255" key="1">
    <source>
        <dbReference type="HAMAP-Rule" id="MF_00445"/>
    </source>
</evidence>
<keyword id="KW-0997">Cell inner membrane</keyword>
<keyword id="KW-1003">Cell membrane</keyword>
<keyword id="KW-0472">Membrane</keyword>
<keyword id="KW-0520">NAD</keyword>
<keyword id="KW-0874">Quinone</keyword>
<keyword id="KW-1185">Reference proteome</keyword>
<keyword id="KW-1278">Translocase</keyword>
<keyword id="KW-0812">Transmembrane</keyword>
<keyword id="KW-1133">Transmembrane helix</keyword>
<keyword id="KW-0813">Transport</keyword>
<keyword id="KW-0830">Ubiquinone</keyword>
<organism>
    <name type="scientific">Nitrosospira multiformis (strain ATCC 25196 / NCIMB 11849 / C 71)</name>
    <dbReference type="NCBI Taxonomy" id="323848"/>
    <lineage>
        <taxon>Bacteria</taxon>
        <taxon>Pseudomonadati</taxon>
        <taxon>Pseudomonadota</taxon>
        <taxon>Betaproteobacteria</taxon>
        <taxon>Nitrosomonadales</taxon>
        <taxon>Nitrosomonadaceae</taxon>
        <taxon>Nitrosospira</taxon>
    </lineage>
</organism>
<accession>Q2YA93</accession>
<name>NUON_NITMU</name>
<dbReference type="EC" id="7.1.1.-" evidence="1"/>
<dbReference type="EMBL" id="CP000103">
    <property type="protein sequence ID" value="ABB74328.1"/>
    <property type="molecule type" value="Genomic_DNA"/>
</dbReference>
<dbReference type="RefSeq" id="WP_011380373.1">
    <property type="nucleotide sequence ID" value="NC_007614.1"/>
</dbReference>
<dbReference type="SMR" id="Q2YA93"/>
<dbReference type="STRING" id="323848.Nmul_A1025"/>
<dbReference type="KEGG" id="nmu:Nmul_A1025"/>
<dbReference type="eggNOG" id="COG1007">
    <property type="taxonomic scope" value="Bacteria"/>
</dbReference>
<dbReference type="HOGENOM" id="CLU_007100_1_5_4"/>
<dbReference type="OrthoDB" id="9768329at2"/>
<dbReference type="Proteomes" id="UP000002718">
    <property type="component" value="Chromosome"/>
</dbReference>
<dbReference type="GO" id="GO:0005886">
    <property type="term" value="C:plasma membrane"/>
    <property type="evidence" value="ECO:0007669"/>
    <property type="project" value="UniProtKB-SubCell"/>
</dbReference>
<dbReference type="GO" id="GO:0008137">
    <property type="term" value="F:NADH dehydrogenase (ubiquinone) activity"/>
    <property type="evidence" value="ECO:0007669"/>
    <property type="project" value="InterPro"/>
</dbReference>
<dbReference type="GO" id="GO:0050136">
    <property type="term" value="F:NADH:ubiquinone reductase (non-electrogenic) activity"/>
    <property type="evidence" value="ECO:0007669"/>
    <property type="project" value="UniProtKB-UniRule"/>
</dbReference>
<dbReference type="GO" id="GO:0048038">
    <property type="term" value="F:quinone binding"/>
    <property type="evidence" value="ECO:0007669"/>
    <property type="project" value="UniProtKB-KW"/>
</dbReference>
<dbReference type="GO" id="GO:0042773">
    <property type="term" value="P:ATP synthesis coupled electron transport"/>
    <property type="evidence" value="ECO:0007669"/>
    <property type="project" value="InterPro"/>
</dbReference>
<dbReference type="HAMAP" id="MF_00445">
    <property type="entry name" value="NDH1_NuoN_1"/>
    <property type="match status" value="1"/>
</dbReference>
<dbReference type="InterPro" id="IPR010096">
    <property type="entry name" value="NADH-Q_OxRdtase_suN/2"/>
</dbReference>
<dbReference type="InterPro" id="IPR001750">
    <property type="entry name" value="ND/Mrp_TM"/>
</dbReference>
<dbReference type="NCBIfam" id="TIGR01770">
    <property type="entry name" value="NDH_I_N"/>
    <property type="match status" value="1"/>
</dbReference>
<dbReference type="PANTHER" id="PTHR22773">
    <property type="entry name" value="NADH DEHYDROGENASE"/>
    <property type="match status" value="1"/>
</dbReference>
<dbReference type="Pfam" id="PF00361">
    <property type="entry name" value="Proton_antipo_M"/>
    <property type="match status" value="1"/>
</dbReference>
<reference key="1">
    <citation type="submission" date="2005-08" db="EMBL/GenBank/DDBJ databases">
        <title>Complete sequence of chromosome 1 of Nitrosospira multiformis ATCC 25196.</title>
        <authorList>
            <person name="Copeland A."/>
            <person name="Lucas S."/>
            <person name="Lapidus A."/>
            <person name="Barry K."/>
            <person name="Detter J.C."/>
            <person name="Glavina T."/>
            <person name="Hammon N."/>
            <person name="Israni S."/>
            <person name="Pitluck S."/>
            <person name="Chain P."/>
            <person name="Malfatti S."/>
            <person name="Shin M."/>
            <person name="Vergez L."/>
            <person name="Schmutz J."/>
            <person name="Larimer F."/>
            <person name="Land M."/>
            <person name="Hauser L."/>
            <person name="Kyrpides N."/>
            <person name="Lykidis A."/>
            <person name="Richardson P."/>
        </authorList>
    </citation>
    <scope>NUCLEOTIDE SEQUENCE [LARGE SCALE GENOMIC DNA]</scope>
    <source>
        <strain>ATCC 25196 / NCIMB 11849 / C 71</strain>
    </source>
</reference>
<gene>
    <name evidence="1" type="primary">nuoN</name>
    <name type="ordered locus">Nmul_A1025</name>
</gene>
<feature type="chain" id="PRO_0000391190" description="NADH-quinone oxidoreductase subunit N">
    <location>
        <begin position="1"/>
        <end position="507"/>
    </location>
</feature>
<feature type="transmembrane region" description="Helical" evidence="1">
    <location>
        <begin position="17"/>
        <end position="37"/>
    </location>
</feature>
<feature type="transmembrane region" description="Helical" evidence="1">
    <location>
        <begin position="46"/>
        <end position="66"/>
    </location>
</feature>
<feature type="transmembrane region" description="Helical" evidence="1">
    <location>
        <begin position="81"/>
        <end position="101"/>
    </location>
</feature>
<feature type="transmembrane region" description="Helical" evidence="1">
    <location>
        <begin position="113"/>
        <end position="133"/>
    </location>
</feature>
<feature type="transmembrane region" description="Helical" evidence="1">
    <location>
        <begin position="134"/>
        <end position="154"/>
    </location>
</feature>
<feature type="transmembrane region" description="Helical" evidence="1">
    <location>
        <begin position="168"/>
        <end position="188"/>
    </location>
</feature>
<feature type="transmembrane region" description="Helical" evidence="1">
    <location>
        <begin position="190"/>
        <end position="210"/>
    </location>
</feature>
<feature type="transmembrane region" description="Helical" evidence="1">
    <location>
        <begin position="211"/>
        <end position="231"/>
    </location>
</feature>
<feature type="transmembrane region" description="Helical" evidence="1">
    <location>
        <begin position="245"/>
        <end position="265"/>
    </location>
</feature>
<feature type="transmembrane region" description="Helical" evidence="1">
    <location>
        <begin position="279"/>
        <end position="299"/>
    </location>
</feature>
<feature type="transmembrane region" description="Helical" evidence="1">
    <location>
        <begin position="307"/>
        <end position="327"/>
    </location>
</feature>
<feature type="transmembrane region" description="Helical" evidence="1">
    <location>
        <begin position="334"/>
        <end position="354"/>
    </location>
</feature>
<feature type="transmembrane region" description="Helical" evidence="1">
    <location>
        <begin position="392"/>
        <end position="412"/>
    </location>
</feature>
<feature type="transmembrane region" description="Helical" evidence="1">
    <location>
        <begin position="425"/>
        <end position="445"/>
    </location>
</feature>
<feature type="transmembrane region" description="Helical" evidence="1">
    <location>
        <begin position="478"/>
        <end position="498"/>
    </location>
</feature>
<sequence length="507" mass="53746">MNPMPSALPSDFLHVDLVTLSPLILLAAAAVVVMLTAAFYRHPRPVMILTLAGLVLSFMALFLSQGTASSQVTTLLILDQYALFFIGLIVVATFVVAILCYRYFGGGESRHEALYILLLLAALGGGVLVASSHFASFLLGLELLSISLFALIAYPRFTEHPLEAGIKYLILAGFSSGLLLFGMALVYAQLGTMQFVKIGTMLAAPGAALELYGLAGLALIVTGVGFKLALVPFHMWTPDVYEGAPVPITAFIATASKGAMLVLLLRYFLMAGAHQSHSITFALSLIAVATILVGNLLALLQNNIKRILAYSSIAQLGYLLVGFLAFDQLAIEAVAYFLTAYFVTMLGAFGVVTVLSEGFNGGSAGEFHDAGEKDSDRLADYAGLFWHRPWLAGVFTAMLLSLAGIPLTMGFIGKFYIVTAGVEASLWMPVITLVIGSIIGLFYYMRIIAVMYGWGPEAAGEAIMLRAASPSFAESATLAALALLLIWLGIFPAQLIGVLEGAGGGLT</sequence>
<protein>
    <recommendedName>
        <fullName evidence="1">NADH-quinone oxidoreductase subunit N</fullName>
        <ecNumber evidence="1">7.1.1.-</ecNumber>
    </recommendedName>
    <alternativeName>
        <fullName evidence="1">NADH dehydrogenase I subunit N</fullName>
    </alternativeName>
    <alternativeName>
        <fullName evidence="1">NDH-1 subunit N</fullName>
    </alternativeName>
</protein>
<proteinExistence type="inferred from homology"/>